<sequence length="352" mass="40633">MGDWEFLEKLLDQVQEHSTSIGKIWLMVLFIFRILILGLAGESVWGDEQSDFTCNTEQPGCTNVCYDKAFPISHVRYWVLQFLFVSTPTLFYLGHVIYLSRKEEKLKQKESELRALDDKEQVEQAIAIIEKKKLKLYIQEDGTVKIKGALMYTYLTSVIFKSIFEAGFLLGQWYLYGFVMTPIYVCERVPCPHKVDCFVSRPMEKTIFIIFMLVVSLISLFLNVLELIHLICKSMIHALKKYSQYIPANRYPKNEDTYPEKTSETATAPFQDKSYIYLPMNENISYPQYKMPNEQNWVNFNTEQQLAISGNTQSPLGHYSLSAFLPVSPKTHSTVEKASTRASSSASKKQYV</sequence>
<protein>
    <recommendedName>
        <fullName>Gap junction alpha-4 protein</fullName>
    </recommendedName>
    <alternativeName>
        <fullName>Connexin-41</fullName>
        <shortName>Cx41</shortName>
    </alternativeName>
</protein>
<dbReference type="EMBL" id="U26256">
    <property type="protein sequence ID" value="AAA93235.1"/>
    <property type="molecule type" value="mRNA"/>
</dbReference>
<dbReference type="RefSeq" id="NP_001165443.1">
    <property type="nucleotide sequence ID" value="NM_001171972.1"/>
</dbReference>
<dbReference type="SMR" id="P51914"/>
<dbReference type="GeneID" id="100335149"/>
<dbReference type="KEGG" id="xla:100335149"/>
<dbReference type="AGR" id="Xenbase:XB-GENE-6464391"/>
<dbReference type="CTD" id="100335149"/>
<dbReference type="Xenbase" id="XB-GENE-6464391">
    <property type="gene designation" value="gja4.L"/>
</dbReference>
<dbReference type="OMA" id="YPKNEDT"/>
<dbReference type="OrthoDB" id="9993956at2759"/>
<dbReference type="Proteomes" id="UP000186698">
    <property type="component" value="Chromosome 2L"/>
</dbReference>
<dbReference type="Bgee" id="100335149">
    <property type="expression patterns" value="Expressed in lung and 14 other cell types or tissues"/>
</dbReference>
<dbReference type="GO" id="GO:0005922">
    <property type="term" value="C:connexin complex"/>
    <property type="evidence" value="ECO:0000318"/>
    <property type="project" value="GO_Central"/>
</dbReference>
<dbReference type="GO" id="GO:0005243">
    <property type="term" value="F:gap junction channel activity"/>
    <property type="evidence" value="ECO:0000318"/>
    <property type="project" value="GO_Central"/>
</dbReference>
<dbReference type="GO" id="GO:0007267">
    <property type="term" value="P:cell-cell signaling"/>
    <property type="evidence" value="ECO:0000318"/>
    <property type="project" value="GO_Central"/>
</dbReference>
<dbReference type="FunFam" id="1.20.1440.80:FF:000001">
    <property type="entry name" value="Gap junction alpha-1"/>
    <property type="match status" value="1"/>
</dbReference>
<dbReference type="Gene3D" id="1.20.1440.80">
    <property type="entry name" value="Gap junction channel protein cysteine-rich domain"/>
    <property type="match status" value="1"/>
</dbReference>
<dbReference type="InterPro" id="IPR000500">
    <property type="entry name" value="Connexin"/>
</dbReference>
<dbReference type="InterPro" id="IPR034634">
    <property type="entry name" value="Connexin_C"/>
</dbReference>
<dbReference type="InterPro" id="IPR019570">
    <property type="entry name" value="Connexin_CCC"/>
</dbReference>
<dbReference type="InterPro" id="IPR017990">
    <property type="entry name" value="Connexin_CS"/>
</dbReference>
<dbReference type="InterPro" id="IPR013092">
    <property type="entry name" value="Connexin_N"/>
</dbReference>
<dbReference type="InterPro" id="IPR038359">
    <property type="entry name" value="Connexin_N_sf"/>
</dbReference>
<dbReference type="PANTHER" id="PTHR11984">
    <property type="entry name" value="CONNEXIN"/>
    <property type="match status" value="1"/>
</dbReference>
<dbReference type="PANTHER" id="PTHR11984:SF54">
    <property type="entry name" value="GAP JUNCTION ALPHA-4 PROTEIN"/>
    <property type="match status" value="1"/>
</dbReference>
<dbReference type="Pfam" id="PF00029">
    <property type="entry name" value="Connexin"/>
    <property type="match status" value="1"/>
</dbReference>
<dbReference type="PRINTS" id="PR00206">
    <property type="entry name" value="CONNEXIN"/>
</dbReference>
<dbReference type="SMART" id="SM00037">
    <property type="entry name" value="CNX"/>
    <property type="match status" value="1"/>
</dbReference>
<dbReference type="SMART" id="SM01089">
    <property type="entry name" value="Connexin_CCC"/>
    <property type="match status" value="1"/>
</dbReference>
<dbReference type="SUPFAM" id="SSF118220">
    <property type="entry name" value="Connexin43"/>
    <property type="match status" value="1"/>
</dbReference>
<dbReference type="PROSITE" id="PS00407">
    <property type="entry name" value="CONNEXINS_1"/>
    <property type="match status" value="1"/>
</dbReference>
<dbReference type="PROSITE" id="PS00408">
    <property type="entry name" value="CONNEXINS_2"/>
    <property type="match status" value="1"/>
</dbReference>
<feature type="initiator methionine" description="Removed" evidence="1">
    <location>
        <position position="1"/>
    </location>
</feature>
<feature type="chain" id="PRO_0000057845" description="Gap junction alpha-4 protein">
    <location>
        <begin position="2"/>
        <end position="352"/>
    </location>
</feature>
<feature type="topological domain" description="Cytoplasmic" evidence="2">
    <location>
        <begin position="2"/>
        <end position="23"/>
    </location>
</feature>
<feature type="transmembrane region" description="Helical" evidence="2">
    <location>
        <begin position="24"/>
        <end position="46"/>
    </location>
</feature>
<feature type="topological domain" description="Extracellular" evidence="2">
    <location>
        <begin position="47"/>
        <end position="76"/>
    </location>
</feature>
<feature type="transmembrane region" description="Helical" evidence="2">
    <location>
        <begin position="77"/>
        <end position="99"/>
    </location>
</feature>
<feature type="topological domain" description="Cytoplasmic" evidence="2">
    <location>
        <begin position="100"/>
        <end position="153"/>
    </location>
</feature>
<feature type="transmembrane region" description="Helical" evidence="2">
    <location>
        <begin position="154"/>
        <end position="176"/>
    </location>
</feature>
<feature type="topological domain" description="Extracellular" evidence="2">
    <location>
        <begin position="177"/>
        <end position="208"/>
    </location>
</feature>
<feature type="transmembrane region" description="Helical" evidence="2">
    <location>
        <begin position="209"/>
        <end position="231"/>
    </location>
</feature>
<feature type="topological domain" description="Cytoplasmic" evidence="2">
    <location>
        <begin position="232"/>
        <end position="352"/>
    </location>
</feature>
<feature type="region of interest" description="Disordered" evidence="3">
    <location>
        <begin position="332"/>
        <end position="352"/>
    </location>
</feature>
<feature type="compositionally biased region" description="Low complexity" evidence="3">
    <location>
        <begin position="340"/>
        <end position="352"/>
    </location>
</feature>
<gene>
    <name type="primary">gja4</name>
    <name type="synonym">cx41</name>
</gene>
<name>CXA4_XENLA</name>
<comment type="function">
    <text>One gap junction consists of a cluster of closely packed pairs of transmembrane channels, the connexons, through which materials of low MW diffuse from one cell to a neighboring cell.</text>
</comment>
<comment type="subunit">
    <text>A connexon is composed of a hexamer of connexins.</text>
</comment>
<comment type="subcellular location">
    <subcellularLocation>
        <location>Cell membrane</location>
        <topology>Multi-pass membrane protein</topology>
    </subcellularLocation>
    <subcellularLocation>
        <location>Cell junction</location>
        <location>Gap junction</location>
    </subcellularLocation>
</comment>
<comment type="tissue specificity">
    <text evidence="4">Expressed in ovarian somatic cells, heart, leg muscle, liver and eye but not in brain.</text>
</comment>
<comment type="developmental stage">
    <text evidence="4">Maternal protein whose levels decrease in late stages of oocyte maturation.</text>
</comment>
<comment type="similarity">
    <text evidence="5">Belongs to the connexin family. Alpha-type (group II) subfamily.</text>
</comment>
<accession>P51914</accession>
<reference key="1">
    <citation type="journal article" date="1995" name="Mol. Reprod. Dev.">
        <title>Molecular cloning, tissue distribution, and hormonal control in the ovary of Cx41 mRNA, a novel Xenopus connexin gene transcript.</title>
        <authorList>
            <person name="Yoshizaki G."/>
            <person name="Patino R."/>
        </authorList>
    </citation>
    <scope>NUCLEOTIDE SEQUENCE [MRNA]</scope>
    <scope>TISSUE SPECIFICITY</scope>
    <scope>DEVELOPMENTAL STAGE</scope>
    <source>
        <tissue>Ovary</tissue>
    </source>
</reference>
<proteinExistence type="evidence at transcript level"/>
<organism>
    <name type="scientific">Xenopus laevis</name>
    <name type="common">African clawed frog</name>
    <dbReference type="NCBI Taxonomy" id="8355"/>
    <lineage>
        <taxon>Eukaryota</taxon>
        <taxon>Metazoa</taxon>
        <taxon>Chordata</taxon>
        <taxon>Craniata</taxon>
        <taxon>Vertebrata</taxon>
        <taxon>Euteleostomi</taxon>
        <taxon>Amphibia</taxon>
        <taxon>Batrachia</taxon>
        <taxon>Anura</taxon>
        <taxon>Pipoidea</taxon>
        <taxon>Pipidae</taxon>
        <taxon>Xenopodinae</taxon>
        <taxon>Xenopus</taxon>
        <taxon>Xenopus</taxon>
    </lineage>
</organism>
<keyword id="KW-0965">Cell junction</keyword>
<keyword id="KW-1003">Cell membrane</keyword>
<keyword id="KW-0303">Gap junction</keyword>
<keyword id="KW-0472">Membrane</keyword>
<keyword id="KW-1185">Reference proteome</keyword>
<keyword id="KW-0812">Transmembrane</keyword>
<keyword id="KW-1133">Transmembrane helix</keyword>
<evidence type="ECO:0000250" key="1"/>
<evidence type="ECO:0000255" key="2"/>
<evidence type="ECO:0000256" key="3">
    <source>
        <dbReference type="SAM" id="MobiDB-lite"/>
    </source>
</evidence>
<evidence type="ECO:0000269" key="4">
    <source>
    </source>
</evidence>
<evidence type="ECO:0000305" key="5"/>